<feature type="chain" id="PRO_0000208612" description="Light-independent protochlorophyllide reductase subunit N">
    <location>
        <begin position="1"/>
        <end position="460"/>
    </location>
</feature>
<feature type="binding site" evidence="1">
    <location>
        <position position="22"/>
    </location>
    <ligand>
        <name>[4Fe-4S] cluster</name>
        <dbReference type="ChEBI" id="CHEBI:49883"/>
        <note>ligand shared with heterodimeric partner</note>
    </ligand>
</feature>
<feature type="binding site" evidence="1">
    <location>
        <position position="47"/>
    </location>
    <ligand>
        <name>[4Fe-4S] cluster</name>
        <dbReference type="ChEBI" id="CHEBI:49883"/>
        <note>ligand shared with heterodimeric partner</note>
    </ligand>
</feature>
<feature type="binding site" evidence="1">
    <location>
        <position position="107"/>
    </location>
    <ligand>
        <name>[4Fe-4S] cluster</name>
        <dbReference type="ChEBI" id="CHEBI:49883"/>
        <note>ligand shared with heterodimeric partner</note>
    </ligand>
</feature>
<accession>P48100</accession>
<geneLocation type="cyanelle"/>
<name>CHLN_CYAPA</name>
<organism>
    <name type="scientific">Cyanophora paradoxa</name>
    <dbReference type="NCBI Taxonomy" id="2762"/>
    <lineage>
        <taxon>Eukaryota</taxon>
        <taxon>Glaucocystophyceae</taxon>
        <taxon>Cyanophoraceae</taxon>
        <taxon>Cyanophora</taxon>
    </lineage>
</organism>
<proteinExistence type="inferred from homology"/>
<keyword id="KW-0004">4Fe-4S</keyword>
<keyword id="KW-0067">ATP-binding</keyword>
<keyword id="KW-0149">Chlorophyll biosynthesis</keyword>
<keyword id="KW-0194">Cyanelle</keyword>
<keyword id="KW-0408">Iron</keyword>
<keyword id="KW-0411">Iron-sulfur</keyword>
<keyword id="KW-0479">Metal-binding</keyword>
<keyword id="KW-0547">Nucleotide-binding</keyword>
<keyword id="KW-0560">Oxidoreductase</keyword>
<keyword id="KW-0602">Photosynthesis</keyword>
<keyword id="KW-0934">Plastid</keyword>
<sequence>MNQINNSTLTFQCETGNYHTFCPISCVAWLYQKIEDSFFLVIGTKTCGYFLQNSMGVMIFAEPRYAMAELEEGDISAQINDYEELKRLCTQIKNDRNPSVIVFIGTCTTEIIKMDLEGIAPKLEAEIGIPIVVARANGLDYTFTQGEDTVLASLIQRCPSKDRETEKINKNNSSLFPSLSIFSKNKNESNLSQDKPNLPLVLFGSLPNSLTNQLEHELEKQNIKISGWLPTKNYKELPVIHEGDYVCGVNPYLARTATNLIRRRKCKLISAPFPIGPDGTRAWIEKICSIFNIEPTGLDEREKAVWDSLENYLPLVKGKSVFFMGDNLLELSIARFLIRCGMIVPEIGIPYLHKRYQEAEIKLLEDTCRKMQVPTPLIIEKPDNYEELKRIEQYRPDLVITGMANANPLEARGINTKWSVEFTFAQIHGFSNARDILELVTRSLRRKNYIQQLGWKELVE</sequence>
<comment type="function">
    <text evidence="1">Component of the dark-operative protochlorophyllide reductase (DPOR) that uses Mg-ATP and reduced ferredoxin to reduce ring D of protochlorophyllide (Pchlide) to form chlorophyllide a (Chlide). This reaction is light-independent. The NB-protein (ChlN-ChlB) is the catalytic component of the complex.</text>
</comment>
<comment type="catalytic activity">
    <reaction evidence="1">
        <text>chlorophyllide a + oxidized 2[4Fe-4S]-[ferredoxin] + 2 ADP + 2 phosphate = protochlorophyllide a + reduced 2[4Fe-4S]-[ferredoxin] + 2 ATP + 2 H2O</text>
        <dbReference type="Rhea" id="RHEA:28202"/>
        <dbReference type="Rhea" id="RHEA-COMP:10002"/>
        <dbReference type="Rhea" id="RHEA-COMP:10004"/>
        <dbReference type="ChEBI" id="CHEBI:15377"/>
        <dbReference type="ChEBI" id="CHEBI:30616"/>
        <dbReference type="ChEBI" id="CHEBI:33722"/>
        <dbReference type="ChEBI" id="CHEBI:33723"/>
        <dbReference type="ChEBI" id="CHEBI:43474"/>
        <dbReference type="ChEBI" id="CHEBI:83348"/>
        <dbReference type="ChEBI" id="CHEBI:83350"/>
        <dbReference type="ChEBI" id="CHEBI:456216"/>
        <dbReference type="EC" id="1.3.7.7"/>
    </reaction>
</comment>
<comment type="cofactor">
    <cofactor evidence="1">
        <name>[4Fe-4S] cluster</name>
        <dbReference type="ChEBI" id="CHEBI:49883"/>
    </cofactor>
    <text evidence="1">Binds 1 [4Fe-4S] cluster per heterodimer. The cluster is bound at the heterodimer interface by residues from both subunits.</text>
</comment>
<comment type="pathway">
    <text evidence="1">Porphyrin-containing compound metabolism; chlorophyll biosynthesis (light-independent).</text>
</comment>
<comment type="subunit">
    <text evidence="1">Protochlorophyllide reductase is composed of three subunits; ChlL, ChlN and ChlB. Forms a heterotetramer of two ChlB and two ChlN subunits.</text>
</comment>
<comment type="subcellular location">
    <subcellularLocation>
        <location>Plastid</location>
        <location>Cyanelle</location>
    </subcellularLocation>
</comment>
<comment type="similarity">
    <text evidence="1">Belongs to the BchN/ChlN family.</text>
</comment>
<evidence type="ECO:0000255" key="1">
    <source>
        <dbReference type="HAMAP-Rule" id="MF_00352"/>
    </source>
</evidence>
<dbReference type="EC" id="1.3.7.7" evidence="1"/>
<dbReference type="EMBL" id="U30821">
    <property type="protein sequence ID" value="AAA81317.1"/>
    <property type="molecule type" value="Genomic_DNA"/>
</dbReference>
<dbReference type="PIR" id="T06974">
    <property type="entry name" value="T06974"/>
</dbReference>
<dbReference type="RefSeq" id="NP_043286.1">
    <property type="nucleotide sequence ID" value="NC_001675.1"/>
</dbReference>
<dbReference type="SMR" id="P48100"/>
<dbReference type="GeneID" id="801627"/>
<dbReference type="UniPathway" id="UPA00670"/>
<dbReference type="GO" id="GO:0009842">
    <property type="term" value="C:cyanelle"/>
    <property type="evidence" value="ECO:0007669"/>
    <property type="project" value="UniProtKB-SubCell"/>
</dbReference>
<dbReference type="GO" id="GO:0051539">
    <property type="term" value="F:4 iron, 4 sulfur cluster binding"/>
    <property type="evidence" value="ECO:0007669"/>
    <property type="project" value="UniProtKB-UniRule"/>
</dbReference>
<dbReference type="GO" id="GO:0005524">
    <property type="term" value="F:ATP binding"/>
    <property type="evidence" value="ECO:0007669"/>
    <property type="project" value="UniProtKB-UniRule"/>
</dbReference>
<dbReference type="GO" id="GO:0046872">
    <property type="term" value="F:metal ion binding"/>
    <property type="evidence" value="ECO:0007669"/>
    <property type="project" value="UniProtKB-KW"/>
</dbReference>
<dbReference type="GO" id="GO:0016730">
    <property type="term" value="F:oxidoreductase activity, acting on iron-sulfur proteins as donors"/>
    <property type="evidence" value="ECO:0007669"/>
    <property type="project" value="InterPro"/>
</dbReference>
<dbReference type="GO" id="GO:0016636">
    <property type="term" value="F:oxidoreductase activity, acting on the CH-CH group of donors, iron-sulfur protein as acceptor"/>
    <property type="evidence" value="ECO:0007669"/>
    <property type="project" value="UniProtKB-UniRule"/>
</dbReference>
<dbReference type="GO" id="GO:0036068">
    <property type="term" value="P:light-independent chlorophyll biosynthetic process"/>
    <property type="evidence" value="ECO:0007669"/>
    <property type="project" value="UniProtKB-UniPathway"/>
</dbReference>
<dbReference type="GO" id="GO:0019685">
    <property type="term" value="P:photosynthesis, dark reaction"/>
    <property type="evidence" value="ECO:0007669"/>
    <property type="project" value="InterPro"/>
</dbReference>
<dbReference type="CDD" id="cd01979">
    <property type="entry name" value="Pchlide_reductase_N"/>
    <property type="match status" value="1"/>
</dbReference>
<dbReference type="Gene3D" id="3.40.50.1980">
    <property type="entry name" value="Nitrogenase molybdenum iron protein domain"/>
    <property type="match status" value="3"/>
</dbReference>
<dbReference type="HAMAP" id="MF_00352">
    <property type="entry name" value="ChlN_BchN"/>
    <property type="match status" value="1"/>
</dbReference>
<dbReference type="InterPro" id="IPR050293">
    <property type="entry name" value="LIPOR_BchN/ChlN"/>
</dbReference>
<dbReference type="InterPro" id="IPR000510">
    <property type="entry name" value="Nase/OxRdtase_comp1"/>
</dbReference>
<dbReference type="InterPro" id="IPR005970">
    <property type="entry name" value="Protochl_reductN"/>
</dbReference>
<dbReference type="NCBIfam" id="TIGR01279">
    <property type="entry name" value="DPOR_bchN"/>
    <property type="match status" value="1"/>
</dbReference>
<dbReference type="NCBIfam" id="NF002768">
    <property type="entry name" value="PRK02842.1"/>
    <property type="match status" value="1"/>
</dbReference>
<dbReference type="PANTHER" id="PTHR39429">
    <property type="entry name" value="LIGHT-INDEPENDENT PROTOCHLOROPHYLLIDE REDUCTASE SUBUNIT N"/>
    <property type="match status" value="1"/>
</dbReference>
<dbReference type="PANTHER" id="PTHR39429:SF3">
    <property type="entry name" value="LIGHT-INDEPENDENT PROTOCHLOROPHYLLIDE REDUCTASE SUBUNIT N"/>
    <property type="match status" value="1"/>
</dbReference>
<dbReference type="Pfam" id="PF00148">
    <property type="entry name" value="Oxidored_nitro"/>
    <property type="match status" value="1"/>
</dbReference>
<dbReference type="PIRSF" id="PIRSF000162">
    <property type="entry name" value="P_chlorophyll_rd"/>
    <property type="match status" value="1"/>
</dbReference>
<dbReference type="SUPFAM" id="SSF53807">
    <property type="entry name" value="Helical backbone' metal receptor"/>
    <property type="match status" value="1"/>
</dbReference>
<reference key="1">
    <citation type="journal article" date="1995" name="Plant Mol. Biol. Rep.">
        <title>Nucleotide sequence of the cyanelle DNA from Cyanophora paradoxa.</title>
        <authorList>
            <person name="Stirewalt V.L."/>
            <person name="Michalowski C.B."/>
            <person name="Loeffelhardt W."/>
            <person name="Bohnert H.J."/>
            <person name="Bryant D.A."/>
        </authorList>
    </citation>
    <scope>NUCLEOTIDE SEQUENCE [LARGE SCALE GENOMIC DNA]</scope>
    <source>
        <strain>UTEX LB 555 / Pringsheim</strain>
    </source>
</reference>
<reference key="2">
    <citation type="book" date="1997" name="Eukaryotism and symbiosis">
        <title>The complete sequence of the cyanelle genome of Cyanophora paradoxa: the genetic complexity of a primitive plastid.</title>
        <editorList>
            <person name="Schenk H.E.A."/>
            <person name="Herrmann R."/>
            <person name="Jeon K.W."/>
            <person name="Mueller N.E."/>
            <person name="Schwemmler W."/>
        </editorList>
        <authorList>
            <person name="Loeffelhardt W."/>
            <person name="Stirewalt V.L."/>
            <person name="Michalowski C.B."/>
            <person name="Annarella M."/>
            <person name="Farley J.Y."/>
            <person name="Schluchter W.M."/>
            <person name="Chung S."/>
            <person name="Newmann-Spallart C."/>
            <person name="Steiner J.M."/>
            <person name="Jakowitsch J."/>
            <person name="Bohnert H.J."/>
            <person name="Bryant D.A."/>
        </authorList>
    </citation>
    <scope>NUCLEOTIDE SEQUENCE [LARGE SCALE GENOMIC DNA]</scope>
    <source>
        <strain>UTEX LB 555 / Pringsheim</strain>
    </source>
</reference>
<gene>
    <name evidence="1" type="primary">chlN</name>
</gene>
<protein>
    <recommendedName>
        <fullName evidence="1">Light-independent protochlorophyllide reductase subunit N</fullName>
        <shortName evidence="1">DPOR subunit N</shortName>
        <shortName evidence="1">LI-POR subunit N</shortName>
        <ecNumber evidence="1">1.3.7.7</ecNumber>
    </recommendedName>
</protein>